<proteinExistence type="inferred from homology"/>
<accession>Q75EI5</accession>
<comment type="function">
    <text evidence="1">Component of the NOP7 complex, which is required for maturation of the 25S and 5.8S ribosomal RNAs and formation of the 60S ribosome.</text>
</comment>
<comment type="subunit">
    <text evidence="1">Component of the NOP7 complex, composed of ERB1, NOP7 and YTM1. The complex is held together by ERB1, which interacts with NOP7 via its N-terminal domain and with YTM1 via a high-affinity interaction between the seven-bladed beta-propeller domains of the 2 proteins. The NOP7 complex associates with the 66S pre-ribosome.</text>
</comment>
<comment type="subcellular location">
    <subcellularLocation>
        <location evidence="1">Nucleus</location>
        <location evidence="1">Nucleolus</location>
    </subcellularLocation>
    <subcellularLocation>
        <location evidence="1">Nucleus</location>
        <location evidence="1">Nucleoplasm</location>
    </subcellularLocation>
</comment>
<comment type="similarity">
    <text evidence="1">Belongs to the pescadillo family.</text>
</comment>
<name>PESC_EREGS</name>
<protein>
    <recommendedName>
        <fullName evidence="1">Pescadillo homolog</fullName>
    </recommendedName>
    <alternativeName>
        <fullName evidence="1">Nucleolar protein 7 homolog</fullName>
    </alternativeName>
</protein>
<sequence length="596" mass="67752">MRVKKKNTTGNARNFVTRSQAVRKLQISLADFRRLCIFKGIYPREPRNKKKANKGSTAPTTFYYYKDIQYLQHEPVLAKFREHKTFAKKLTRALGRGEVSSAKKLEENKSHYKLDHIIKERYPSFADALRDLDDALNMLFLFANLPATDQVSTRVTKDAQELCNQWLALIARERLVRKVFVSIKGVYYQANVRGEEVRWLVPYKFPENIPSDVDFRIMLTFLEFYSTLLHFVLYKLYTDNGLVYPPKLDIKKNKLIGGISAYILESKDAPFLSSVDGSADSENQEVQVLDKKALRHAMKADDKAGSEADEGDADSNEQVTNIELDDFEDKNKNHGDILEQPSQYDSPTSTLFSEFVFYIGREVPVDILEFLIVSCGGSVISEAALDQADAANVDVSKVTHQLVDRPVVKNKVAGRTYIQPQWVFDSINKGELVPANLYLPGESLPPHLSPWGDSVGYDPAAELAEEEAESEEEEEVSDEAEGDEEATLAAEEDEEDEAEAEELRAQKELELEAQGVTYSEAADSAAPSKKASKQKKRKTEEEEEKDLKLIMMSNKQRKLFKKMKYSNQQKEQEIETLKQKKKQIAKTKAKLKKLEN</sequence>
<dbReference type="EMBL" id="AE016814">
    <property type="protein sequence ID" value="AAS50459.1"/>
    <property type="molecule type" value="Genomic_DNA"/>
</dbReference>
<dbReference type="RefSeq" id="NP_982635.1">
    <property type="nucleotide sequence ID" value="NM_207988.1"/>
</dbReference>
<dbReference type="SMR" id="Q75EI5"/>
<dbReference type="FunCoup" id="Q75EI5">
    <property type="interactions" value="1439"/>
</dbReference>
<dbReference type="STRING" id="284811.Q75EI5"/>
<dbReference type="EnsemblFungi" id="AAS50459">
    <property type="protein sequence ID" value="AAS50459"/>
    <property type="gene ID" value="AGOS_AAR094W"/>
</dbReference>
<dbReference type="GeneID" id="4618625"/>
<dbReference type="KEGG" id="ago:AGOS_AAR094W"/>
<dbReference type="eggNOG" id="KOG2481">
    <property type="taxonomic scope" value="Eukaryota"/>
</dbReference>
<dbReference type="HOGENOM" id="CLU_019619_1_1_1"/>
<dbReference type="InParanoid" id="Q75EI5"/>
<dbReference type="OMA" id="QKVTWIV"/>
<dbReference type="OrthoDB" id="10264910at2759"/>
<dbReference type="Proteomes" id="UP000000591">
    <property type="component" value="Chromosome I"/>
</dbReference>
<dbReference type="GO" id="GO:0005654">
    <property type="term" value="C:nucleoplasm"/>
    <property type="evidence" value="ECO:0007669"/>
    <property type="project" value="UniProtKB-SubCell"/>
</dbReference>
<dbReference type="GO" id="GO:0070545">
    <property type="term" value="C:PeBoW complex"/>
    <property type="evidence" value="ECO:0000318"/>
    <property type="project" value="GO_Central"/>
</dbReference>
<dbReference type="GO" id="GO:0030687">
    <property type="term" value="C:preribosome, large subunit precursor"/>
    <property type="evidence" value="ECO:0007669"/>
    <property type="project" value="UniProtKB-UniRule"/>
</dbReference>
<dbReference type="GO" id="GO:0070180">
    <property type="term" value="F:large ribosomal subunit rRNA binding"/>
    <property type="evidence" value="ECO:0007669"/>
    <property type="project" value="EnsemblFungi"/>
</dbReference>
<dbReference type="GO" id="GO:0043021">
    <property type="term" value="F:ribonucleoprotein complex binding"/>
    <property type="evidence" value="ECO:0007669"/>
    <property type="project" value="UniProtKB-UniRule"/>
</dbReference>
<dbReference type="GO" id="GO:0003723">
    <property type="term" value="F:RNA binding"/>
    <property type="evidence" value="ECO:0000318"/>
    <property type="project" value="GO_Central"/>
</dbReference>
<dbReference type="GO" id="GO:0000466">
    <property type="term" value="P:maturation of 5.8S rRNA from tricistronic rRNA transcript (SSU-rRNA, 5.8S rRNA, LSU-rRNA)"/>
    <property type="evidence" value="ECO:0007669"/>
    <property type="project" value="UniProtKB-UniRule"/>
</dbReference>
<dbReference type="GO" id="GO:0000463">
    <property type="term" value="P:maturation of LSU-rRNA from tricistronic rRNA transcript (SSU-rRNA, 5.8S rRNA, LSU-rRNA)"/>
    <property type="evidence" value="ECO:0000318"/>
    <property type="project" value="GO_Central"/>
</dbReference>
<dbReference type="GO" id="GO:0000462">
    <property type="term" value="P:maturation of SSU-rRNA from tricistronic rRNA transcript (SSU-rRNA, 5.8S rRNA, LSU-rRNA)"/>
    <property type="evidence" value="ECO:0007669"/>
    <property type="project" value="EnsemblFungi"/>
</dbReference>
<dbReference type="CDD" id="cd17709">
    <property type="entry name" value="BRCT_pescadillo_like"/>
    <property type="match status" value="1"/>
</dbReference>
<dbReference type="FunFam" id="3.40.50.10190:FF:000067">
    <property type="entry name" value="Pescadillo homolog"/>
    <property type="match status" value="1"/>
</dbReference>
<dbReference type="Gene3D" id="3.40.50.10190">
    <property type="entry name" value="BRCT domain"/>
    <property type="match status" value="1"/>
</dbReference>
<dbReference type="HAMAP" id="MF_03028">
    <property type="entry name" value="Pescadillo"/>
    <property type="match status" value="1"/>
</dbReference>
<dbReference type="InterPro" id="IPR001357">
    <property type="entry name" value="BRCT_dom"/>
</dbReference>
<dbReference type="InterPro" id="IPR036420">
    <property type="entry name" value="BRCT_dom_sf"/>
</dbReference>
<dbReference type="InterPro" id="IPR010613">
    <property type="entry name" value="PES"/>
</dbReference>
<dbReference type="PANTHER" id="PTHR12221">
    <property type="entry name" value="PESCADILLO - RELATED"/>
    <property type="match status" value="1"/>
</dbReference>
<dbReference type="PANTHER" id="PTHR12221:SF6">
    <property type="entry name" value="PESCADILLO HOMOLOG"/>
    <property type="match status" value="1"/>
</dbReference>
<dbReference type="Pfam" id="PF16589">
    <property type="entry name" value="BRCT_2"/>
    <property type="match status" value="1"/>
</dbReference>
<dbReference type="Pfam" id="PF06732">
    <property type="entry name" value="Pescadillo_N"/>
    <property type="match status" value="1"/>
</dbReference>
<dbReference type="SMART" id="SM00292">
    <property type="entry name" value="BRCT"/>
    <property type="match status" value="1"/>
</dbReference>
<dbReference type="SUPFAM" id="SSF52113">
    <property type="entry name" value="BRCT domain"/>
    <property type="match status" value="1"/>
</dbReference>
<dbReference type="PROSITE" id="PS50172">
    <property type="entry name" value="BRCT"/>
    <property type="match status" value="1"/>
</dbReference>
<gene>
    <name evidence="1" type="primary">NOP7</name>
    <name type="ordered locus">AAR094W</name>
</gene>
<evidence type="ECO:0000255" key="1">
    <source>
        <dbReference type="HAMAP-Rule" id="MF_03028"/>
    </source>
</evidence>
<evidence type="ECO:0000256" key="2">
    <source>
        <dbReference type="SAM" id="MobiDB-lite"/>
    </source>
</evidence>
<keyword id="KW-0175">Coiled coil</keyword>
<keyword id="KW-0539">Nucleus</keyword>
<keyword id="KW-1185">Reference proteome</keyword>
<keyword id="KW-0690">Ribosome biogenesis</keyword>
<keyword id="KW-0698">rRNA processing</keyword>
<feature type="chain" id="PRO_0000370477" description="Pescadillo homolog">
    <location>
        <begin position="1"/>
        <end position="596"/>
    </location>
</feature>
<feature type="domain" description="BRCT" evidence="1">
    <location>
        <begin position="347"/>
        <end position="440"/>
    </location>
</feature>
<feature type="region of interest" description="Disordered" evidence="2">
    <location>
        <begin position="449"/>
        <end position="552"/>
    </location>
</feature>
<feature type="coiled-coil region" evidence="1">
    <location>
        <begin position="460"/>
        <end position="596"/>
    </location>
</feature>
<feature type="compositionally biased region" description="Acidic residues" evidence="2">
    <location>
        <begin position="463"/>
        <end position="500"/>
    </location>
</feature>
<feature type="compositionally biased region" description="Basic and acidic residues" evidence="2">
    <location>
        <begin position="501"/>
        <end position="510"/>
    </location>
</feature>
<feature type="compositionally biased region" description="Low complexity" evidence="2">
    <location>
        <begin position="519"/>
        <end position="529"/>
    </location>
</feature>
<reference key="1">
    <citation type="journal article" date="2004" name="Science">
        <title>The Ashbya gossypii genome as a tool for mapping the ancient Saccharomyces cerevisiae genome.</title>
        <authorList>
            <person name="Dietrich F.S."/>
            <person name="Voegeli S."/>
            <person name="Brachat S."/>
            <person name="Lerch A."/>
            <person name="Gates K."/>
            <person name="Steiner S."/>
            <person name="Mohr C."/>
            <person name="Poehlmann R."/>
            <person name="Luedi P."/>
            <person name="Choi S."/>
            <person name="Wing R.A."/>
            <person name="Flavier A."/>
            <person name="Gaffney T.D."/>
            <person name="Philippsen P."/>
        </authorList>
    </citation>
    <scope>NUCLEOTIDE SEQUENCE [LARGE SCALE GENOMIC DNA]</scope>
    <source>
        <strain>ATCC 10895 / CBS 109.51 / FGSC 9923 / NRRL Y-1056</strain>
    </source>
</reference>
<reference key="2">
    <citation type="journal article" date="2013" name="G3 (Bethesda)">
        <title>Genomes of Ashbya fungi isolated from insects reveal four mating-type loci, numerous translocations, lack of transposons, and distinct gene duplications.</title>
        <authorList>
            <person name="Dietrich F.S."/>
            <person name="Voegeli S."/>
            <person name="Kuo S."/>
            <person name="Philippsen P."/>
        </authorList>
    </citation>
    <scope>GENOME REANNOTATION</scope>
    <source>
        <strain>ATCC 10895 / CBS 109.51 / FGSC 9923 / NRRL Y-1056</strain>
    </source>
</reference>
<organism>
    <name type="scientific">Eremothecium gossypii (strain ATCC 10895 / CBS 109.51 / FGSC 9923 / NRRL Y-1056)</name>
    <name type="common">Yeast</name>
    <name type="synonym">Ashbya gossypii</name>
    <dbReference type="NCBI Taxonomy" id="284811"/>
    <lineage>
        <taxon>Eukaryota</taxon>
        <taxon>Fungi</taxon>
        <taxon>Dikarya</taxon>
        <taxon>Ascomycota</taxon>
        <taxon>Saccharomycotina</taxon>
        <taxon>Saccharomycetes</taxon>
        <taxon>Saccharomycetales</taxon>
        <taxon>Saccharomycetaceae</taxon>
        <taxon>Eremothecium</taxon>
    </lineage>
</organism>